<reference key="1">
    <citation type="journal article" date="1992" name="J. Gen. Virol.">
        <title>Glycoprotein 300 is encoded by gene 28 of equine herpesvirus type 1: a new family of herpesvirus membrane proteins?</title>
        <authorList>
            <person name="Whittaker G.R."/>
            <person name="Bonass W.A."/>
            <person name="Elton D.M."/>
            <person name="Halliburton I.W."/>
            <person name="Killington R.A."/>
            <person name="Meredith D.M."/>
        </authorList>
    </citation>
    <scope>NUCLEOTIDE SEQUENCE [GENOMIC DNA]</scope>
    <scope>IDENTIFICATION OF PROTEIN</scope>
</reference>
<proteinExistence type="inferred from homology"/>
<keyword id="KW-1035">Host cytoplasm</keyword>
<keyword id="KW-1048">Host nucleus</keyword>
<keyword id="KW-0479">Metal-binding</keyword>
<keyword id="KW-0862">Zinc</keyword>
<keyword id="KW-0863">Zinc-finger</keyword>
<evidence type="ECO:0000250" key="1"/>
<evidence type="ECO:0000255" key="2">
    <source>
        <dbReference type="PROSITE-ProRule" id="PRU01332"/>
    </source>
</evidence>
<evidence type="ECO:0000305" key="3"/>
<organismHost>
    <name type="scientific">Equus caballus</name>
    <name type="common">Horse</name>
    <dbReference type="NCBI Taxonomy" id="9796"/>
</organismHost>
<organism>
    <name type="scientific">Equine herpesvirus 1 (strain AB1)</name>
    <name type="common">EHV-1</name>
    <name type="synonym">Equine abortion virus</name>
    <dbReference type="NCBI Taxonomy" id="10328"/>
    <lineage>
        <taxon>Viruses</taxon>
        <taxon>Duplodnaviria</taxon>
        <taxon>Heunggongvirae</taxon>
        <taxon>Peploviricota</taxon>
        <taxon>Herviviricetes</taxon>
        <taxon>Herpesvirales</taxon>
        <taxon>Orthoherpesviridae</taxon>
        <taxon>Alphaherpesvirinae</taxon>
        <taxon>Varicellovirus</taxon>
        <taxon>Varicellovirus equidalpha1</taxon>
        <taxon>Equid alphaherpesvirus 1</taxon>
    </lineage>
</organism>
<feature type="chain" id="PRO_0000116015" description="Packaging protein UL32 homolog">
    <location>
        <begin position="1"/>
        <end position="620"/>
    </location>
</feature>
<feature type="region of interest" description="Zinc finger 1" evidence="2">
    <location>
        <begin position="100"/>
        <end position="186"/>
    </location>
</feature>
<feature type="region of interest" description="Zinc finger 3" evidence="2">
    <location>
        <begin position="306"/>
        <end position="605"/>
    </location>
</feature>
<feature type="region of interest" description="Zinc finger 2" evidence="2">
    <location>
        <begin position="433"/>
        <end position="525"/>
    </location>
</feature>
<feature type="binding site" evidence="2">
    <location>
        <position position="100"/>
    </location>
    <ligand>
        <name>Zn(2+)</name>
        <dbReference type="ChEBI" id="CHEBI:29105"/>
        <label>1</label>
    </ligand>
</feature>
<feature type="binding site" evidence="2">
    <location>
        <position position="103"/>
    </location>
    <ligand>
        <name>Zn(2+)</name>
        <dbReference type="ChEBI" id="CHEBI:29105"/>
        <label>1</label>
    </ligand>
</feature>
<feature type="binding site" evidence="2">
    <location>
        <position position="180"/>
    </location>
    <ligand>
        <name>Zn(2+)</name>
        <dbReference type="ChEBI" id="CHEBI:29105"/>
        <label>1</label>
    </ligand>
</feature>
<feature type="binding site" evidence="2">
    <location>
        <position position="186"/>
    </location>
    <ligand>
        <name>Zn(2+)</name>
        <dbReference type="ChEBI" id="CHEBI:29105"/>
        <label>1</label>
    </ligand>
</feature>
<feature type="binding site" evidence="2">
    <location>
        <position position="306"/>
    </location>
    <ligand>
        <name>Zn(2+)</name>
        <dbReference type="ChEBI" id="CHEBI:29105"/>
        <label>3</label>
    </ligand>
</feature>
<feature type="binding site" evidence="2">
    <location>
        <position position="307"/>
    </location>
    <ligand>
        <name>Zn(2+)</name>
        <dbReference type="ChEBI" id="CHEBI:29105"/>
        <label>3</label>
    </ligand>
</feature>
<feature type="binding site" evidence="2">
    <location>
        <position position="433"/>
    </location>
    <ligand>
        <name>Zn(2+)</name>
        <dbReference type="ChEBI" id="CHEBI:29105"/>
        <label>2</label>
    </ligand>
</feature>
<feature type="binding site" evidence="2">
    <location>
        <position position="436"/>
    </location>
    <ligand>
        <name>Zn(2+)</name>
        <dbReference type="ChEBI" id="CHEBI:29105"/>
        <label>2</label>
    </ligand>
</feature>
<feature type="binding site" evidence="2">
    <location>
        <position position="518"/>
    </location>
    <ligand>
        <name>Zn(2+)</name>
        <dbReference type="ChEBI" id="CHEBI:29105"/>
        <label>2</label>
    </ligand>
</feature>
<feature type="binding site" evidence="2">
    <location>
        <position position="525"/>
    </location>
    <ligand>
        <name>Zn(2+)</name>
        <dbReference type="ChEBI" id="CHEBI:29105"/>
        <label>2</label>
    </ligand>
</feature>
<feature type="binding site" evidence="2">
    <location>
        <position position="568"/>
    </location>
    <ligand>
        <name>Zn(2+)</name>
        <dbReference type="ChEBI" id="CHEBI:29105"/>
        <label>3</label>
    </ligand>
</feature>
<feature type="binding site" evidence="2">
    <location>
        <position position="605"/>
    </location>
    <ligand>
        <name>Zn(2+)</name>
        <dbReference type="ChEBI" id="CHEBI:29105"/>
        <label>3</label>
    </ligand>
</feature>
<comment type="function">
    <text evidence="1">Plays a role in efficient localization of neo-synthesized capsids to nuclear replication compartments, thereby controlling cleavage and packaging of virus genomic DNA.</text>
</comment>
<comment type="subcellular location">
    <subcellularLocation>
        <location>Host cytoplasm</location>
    </subcellularLocation>
    <subcellularLocation>
        <location>Host nucleus</location>
    </subcellularLocation>
    <text evidence="1">Mainly cytoplasmic in transfected cell culture.</text>
</comment>
<comment type="similarity">
    <text evidence="3">Belongs to the herpesviridae UL32 protein family.</text>
</comment>
<comment type="caution">
    <text evidence="3">Was originally [PubMed:1331295] thought to be an envelope glycoprotein.</text>
</comment>
<sequence>MAASCNLDVIGEDGGCALTGGWQPGAFERPYMGFDARLLSTNSSLCSELIFSAHLMQISPTPQPREQVDVCEDPDNDPPEPSCAQFVDAVADSLALDKLCLICRTIDLYRRQFGLSPQWIADYAMLCTKTLAAPPCAVATVVAAFEFVYLMDKHYLRRGKTTLVGAFARRVLTLVDIQRHFFLHVCFRTDGGVPRCAASGTAPAATAMAGLGMADKVQYSNYSFLVQSSTRAMLLTVADVPSGDDGALQAVPHGRHGAGRPADGGGGVFGPKQQSTVAALMSWKECAKMIDCSGSERRRPGATMTCCERARADDDEYERQLLSTENTYLGSADNQAEGGNDTHLKWGYADLTLLLLSQSSTWEASEKTSLASQSRRACVEEYWASHRTVLARDTAPRFARFVDADAVPDTATGPVLATTLKHVRSRGRTCAECVLCNLILTREHWLALRRFKRDVISYSSNNANLFDCISPVLSALSDANSEPLAGDCGVGGGGTCPEDSGRFLELMHAAGTEAIYKHLFCDPMCALVELQTNPSVLFSPIGPPPEPDEIELQKARLASENWFSGRVCAGLWALAFTFKTYQIFTPKPTACAAFIKDAGLLLRRHNLPLISLEHTLCNYV</sequence>
<dbReference type="EMBL" id="M84239">
    <property type="protein sequence ID" value="AAA46094.1"/>
    <property type="molecule type" value="Genomic_DNA"/>
</dbReference>
<dbReference type="PIR" id="B36798">
    <property type="entry name" value="WZBEC1"/>
</dbReference>
<dbReference type="RefSeq" id="YP_053073.1">
    <property type="nucleotide sequence ID" value="NC_001491.2"/>
</dbReference>
<dbReference type="SMR" id="P68338"/>
<dbReference type="GeneID" id="1487568"/>
<dbReference type="KEGG" id="vg:1487568"/>
<dbReference type="GO" id="GO:0030430">
    <property type="term" value="C:host cell cytoplasm"/>
    <property type="evidence" value="ECO:0007669"/>
    <property type="project" value="UniProtKB-SubCell"/>
</dbReference>
<dbReference type="GO" id="GO:0042025">
    <property type="term" value="C:host cell nucleus"/>
    <property type="evidence" value="ECO:0007669"/>
    <property type="project" value="UniProtKB-SubCell"/>
</dbReference>
<dbReference type="GO" id="GO:0019031">
    <property type="term" value="C:viral envelope"/>
    <property type="evidence" value="ECO:0007669"/>
    <property type="project" value="InterPro"/>
</dbReference>
<dbReference type="GO" id="GO:0008270">
    <property type="term" value="F:zinc ion binding"/>
    <property type="evidence" value="ECO:0007669"/>
    <property type="project" value="UniProtKB-KW"/>
</dbReference>
<dbReference type="InterPro" id="IPR002597">
    <property type="entry name" value="Herpes_env"/>
</dbReference>
<dbReference type="Pfam" id="PF01673">
    <property type="entry name" value="Herpes_env"/>
    <property type="match status" value="1"/>
</dbReference>
<dbReference type="PROSITE" id="PS51988">
    <property type="entry name" value="HERPESVIRUS_UL32"/>
    <property type="match status" value="1"/>
</dbReference>
<protein>
    <recommendedName>
        <fullName>Packaging protein UL32 homolog</fullName>
    </recommendedName>
    <alternativeName>
        <fullName>Glycoprotein 300</fullName>
        <shortName>GP300</shortName>
    </alternativeName>
</protein>
<accession>P68338</accession>
<accession>P28952</accession>
<accession>Q6S6P3</accession>
<name>UL32_EHV1A</name>